<evidence type="ECO:0000255" key="1">
    <source>
        <dbReference type="HAMAP-Rule" id="MF_00373"/>
    </source>
</evidence>
<evidence type="ECO:0000305" key="2"/>
<name>RL28_LACP7</name>
<reference key="1">
    <citation type="submission" date="2007-11" db="EMBL/GenBank/DDBJ databases">
        <title>Complete genome sequence of Clostridium phytofermentans ISDg.</title>
        <authorList>
            <person name="Leschine S.B."/>
            <person name="Warnick T.A."/>
            <person name="Blanchard J.L."/>
            <person name="Schnell D.J."/>
            <person name="Petit E.L."/>
            <person name="LaTouf W.G."/>
            <person name="Copeland A."/>
            <person name="Lucas S."/>
            <person name="Lapidus A."/>
            <person name="Barry K."/>
            <person name="Glavina del Rio T."/>
            <person name="Dalin E."/>
            <person name="Tice H."/>
            <person name="Pitluck S."/>
            <person name="Kiss H."/>
            <person name="Brettin T."/>
            <person name="Bruce D."/>
            <person name="Detter J.C."/>
            <person name="Han C."/>
            <person name="Kuske C."/>
            <person name="Schmutz J."/>
            <person name="Larimer F."/>
            <person name="Land M."/>
            <person name="Hauser L."/>
            <person name="Kyrpides N."/>
            <person name="Kim E.A."/>
            <person name="Richardson P."/>
        </authorList>
    </citation>
    <scope>NUCLEOTIDE SEQUENCE [LARGE SCALE GENOMIC DNA]</scope>
    <source>
        <strain>ATCC 700394 / DSM 18823 / ISDg</strain>
    </source>
</reference>
<feature type="chain" id="PRO_1000205590" description="Large ribosomal subunit protein bL28">
    <location>
        <begin position="1"/>
        <end position="65"/>
    </location>
</feature>
<proteinExistence type="inferred from homology"/>
<dbReference type="EMBL" id="CP000885">
    <property type="protein sequence ID" value="ABX43251.1"/>
    <property type="molecule type" value="Genomic_DNA"/>
</dbReference>
<dbReference type="RefSeq" id="WP_012200902.1">
    <property type="nucleotide sequence ID" value="NC_010001.1"/>
</dbReference>
<dbReference type="SMR" id="A9KPH7"/>
<dbReference type="STRING" id="357809.Cphy_2893"/>
<dbReference type="KEGG" id="cpy:Cphy_2893"/>
<dbReference type="eggNOG" id="COG0227">
    <property type="taxonomic scope" value="Bacteria"/>
</dbReference>
<dbReference type="HOGENOM" id="CLU_064548_7_0_9"/>
<dbReference type="OrthoDB" id="9805609at2"/>
<dbReference type="Proteomes" id="UP000000370">
    <property type="component" value="Chromosome"/>
</dbReference>
<dbReference type="GO" id="GO:1990904">
    <property type="term" value="C:ribonucleoprotein complex"/>
    <property type="evidence" value="ECO:0007669"/>
    <property type="project" value="UniProtKB-KW"/>
</dbReference>
<dbReference type="GO" id="GO:0005840">
    <property type="term" value="C:ribosome"/>
    <property type="evidence" value="ECO:0007669"/>
    <property type="project" value="UniProtKB-KW"/>
</dbReference>
<dbReference type="GO" id="GO:0003735">
    <property type="term" value="F:structural constituent of ribosome"/>
    <property type="evidence" value="ECO:0007669"/>
    <property type="project" value="InterPro"/>
</dbReference>
<dbReference type="GO" id="GO:0006412">
    <property type="term" value="P:translation"/>
    <property type="evidence" value="ECO:0007669"/>
    <property type="project" value="UniProtKB-UniRule"/>
</dbReference>
<dbReference type="Gene3D" id="2.30.170.40">
    <property type="entry name" value="Ribosomal protein L28/L24"/>
    <property type="match status" value="1"/>
</dbReference>
<dbReference type="HAMAP" id="MF_00373">
    <property type="entry name" value="Ribosomal_bL28"/>
    <property type="match status" value="1"/>
</dbReference>
<dbReference type="InterPro" id="IPR050096">
    <property type="entry name" value="Bacterial_rp_bL28"/>
</dbReference>
<dbReference type="InterPro" id="IPR026569">
    <property type="entry name" value="Ribosomal_bL28"/>
</dbReference>
<dbReference type="InterPro" id="IPR034704">
    <property type="entry name" value="Ribosomal_bL28/bL31-like_sf"/>
</dbReference>
<dbReference type="InterPro" id="IPR037147">
    <property type="entry name" value="Ribosomal_bL28_sf"/>
</dbReference>
<dbReference type="PANTHER" id="PTHR39080">
    <property type="entry name" value="50S RIBOSOMAL PROTEIN L28"/>
    <property type="match status" value="1"/>
</dbReference>
<dbReference type="PANTHER" id="PTHR39080:SF1">
    <property type="entry name" value="LARGE RIBOSOMAL SUBUNIT PROTEIN BL28A"/>
    <property type="match status" value="1"/>
</dbReference>
<dbReference type="Pfam" id="PF00830">
    <property type="entry name" value="Ribosomal_L28"/>
    <property type="match status" value="1"/>
</dbReference>
<dbReference type="SUPFAM" id="SSF143800">
    <property type="entry name" value="L28p-like"/>
    <property type="match status" value="1"/>
</dbReference>
<gene>
    <name evidence="1" type="primary">rpmB</name>
    <name type="ordered locus">Cphy_2893</name>
</gene>
<sequence>MAKCAICDKGAHFGKVVSHSRSQVSGRSNKMWKSNVKSVRIKVNGGTQKMYVCTSCLRDGKVERA</sequence>
<keyword id="KW-1185">Reference proteome</keyword>
<keyword id="KW-0687">Ribonucleoprotein</keyword>
<keyword id="KW-0689">Ribosomal protein</keyword>
<organism>
    <name type="scientific">Lachnoclostridium phytofermentans (strain ATCC 700394 / DSM 18823 / ISDg)</name>
    <name type="common">Clostridium phytofermentans</name>
    <dbReference type="NCBI Taxonomy" id="357809"/>
    <lineage>
        <taxon>Bacteria</taxon>
        <taxon>Bacillati</taxon>
        <taxon>Bacillota</taxon>
        <taxon>Clostridia</taxon>
        <taxon>Lachnospirales</taxon>
        <taxon>Lachnospiraceae</taxon>
    </lineage>
</organism>
<protein>
    <recommendedName>
        <fullName evidence="1">Large ribosomal subunit protein bL28</fullName>
    </recommendedName>
    <alternativeName>
        <fullName evidence="2">50S ribosomal protein L28</fullName>
    </alternativeName>
</protein>
<accession>A9KPH7</accession>
<comment type="similarity">
    <text evidence="1">Belongs to the bacterial ribosomal protein bL28 family.</text>
</comment>